<evidence type="ECO:0000250" key="1"/>
<evidence type="ECO:0000256" key="2">
    <source>
        <dbReference type="SAM" id="MobiDB-lite"/>
    </source>
</evidence>
<evidence type="ECO:0000305" key="3"/>
<sequence length="400" mass="43956">MSDLQRTWAKAKFGASNDPFDEPQEEQGQDVLPELPEPVDDDSSSASSASSVSSTGTIIPSPNQKLFARPQGVARGRTLEQIPWTTYFEREVSLKSEQDPEVIYHAYLTSPVGKGPLFVMHHGAGSSGLSFAVVASQIRKRISTAGILALDCRGHGSTYAPEDKAFDMRLDTLSSDLYNVVQLTKTEMSWPEMPPIVLVGHSLGGAVVTDLAKSGKLGTSVLGYAVLDVVEGSAIDALQSMHTYLSTRPLGFATLQAGIEWHIRSRTIRNSISARTSVPALLVFNENDDPTRPWRWRTNLGATQPYWEDWFVGLSKKFLEARGGKMLLLAGTDRLDTELTIGQMQGKYALQVFPEAGHFIHEDLPEKTAVSLVDFFRRNDRTALVLPPKVSDLIKQGKRV</sequence>
<dbReference type="EC" id="3.1.1.89"/>
<dbReference type="EMBL" id="DS231663">
    <property type="protein sequence ID" value="ESU05789.1"/>
    <property type="molecule type" value="Genomic_DNA"/>
</dbReference>
<dbReference type="EMBL" id="HG970332">
    <property type="protein sequence ID" value="CEF72549.1"/>
    <property type="molecule type" value="Genomic_DNA"/>
</dbReference>
<dbReference type="RefSeq" id="XP_011316274.1">
    <property type="nucleotide sequence ID" value="XM_011317972.1"/>
</dbReference>
<dbReference type="SMR" id="Q4IQC1"/>
<dbReference type="FunCoup" id="Q4IQC1">
    <property type="interactions" value="858"/>
</dbReference>
<dbReference type="STRING" id="229533.Q4IQC1"/>
<dbReference type="ESTHER" id="gibze-ppme1">
    <property type="family name" value="PPase_methylesterase_euk"/>
</dbReference>
<dbReference type="GeneID" id="23548072"/>
<dbReference type="KEGG" id="fgr:FGSG_00587"/>
<dbReference type="VEuPathDB" id="FungiDB:FGRAMPH1_01G01497"/>
<dbReference type="eggNOG" id="KOG2564">
    <property type="taxonomic scope" value="Eukaryota"/>
</dbReference>
<dbReference type="HOGENOM" id="CLU_024818_3_0_1"/>
<dbReference type="InParanoid" id="Q4IQC1"/>
<dbReference type="OrthoDB" id="87328at110618"/>
<dbReference type="Proteomes" id="UP000070720">
    <property type="component" value="Chromosome 1"/>
</dbReference>
<dbReference type="GO" id="GO:0051722">
    <property type="term" value="F:protein C-terminal methylesterase activity"/>
    <property type="evidence" value="ECO:0007669"/>
    <property type="project" value="UniProtKB-EC"/>
</dbReference>
<dbReference type="FunFam" id="3.40.50.1820:FF:000186">
    <property type="entry name" value="Protein phosphatase methylesterase 1"/>
    <property type="match status" value="1"/>
</dbReference>
<dbReference type="Gene3D" id="3.40.50.1820">
    <property type="entry name" value="alpha/beta hydrolase"/>
    <property type="match status" value="1"/>
</dbReference>
<dbReference type="InterPro" id="IPR000073">
    <property type="entry name" value="AB_hydrolase_1"/>
</dbReference>
<dbReference type="InterPro" id="IPR029058">
    <property type="entry name" value="AB_hydrolase_fold"/>
</dbReference>
<dbReference type="InterPro" id="IPR016812">
    <property type="entry name" value="PPase_methylesterase_euk"/>
</dbReference>
<dbReference type="PANTHER" id="PTHR14189:SF0">
    <property type="entry name" value="PROTEIN PHOSPHATASE METHYLESTERASE 1"/>
    <property type="match status" value="1"/>
</dbReference>
<dbReference type="PANTHER" id="PTHR14189">
    <property type="entry name" value="PROTEIN PHOSPHATASE METHYLESTERASE-1 RELATED"/>
    <property type="match status" value="1"/>
</dbReference>
<dbReference type="Pfam" id="PF12697">
    <property type="entry name" value="Abhydrolase_6"/>
    <property type="match status" value="1"/>
</dbReference>
<dbReference type="PIRSF" id="PIRSF022950">
    <property type="entry name" value="PPase_methylesterase_euk"/>
    <property type="match status" value="1"/>
</dbReference>
<dbReference type="SUPFAM" id="SSF53474">
    <property type="entry name" value="alpha/beta-Hydrolases"/>
    <property type="match status" value="1"/>
</dbReference>
<feature type="chain" id="PRO_0000223666" description="Protein phosphatase methylesterase 1">
    <location>
        <begin position="1"/>
        <end position="400"/>
    </location>
</feature>
<feature type="region of interest" description="Disordered" evidence="2">
    <location>
        <begin position="1"/>
        <end position="72"/>
    </location>
</feature>
<feature type="compositionally biased region" description="Acidic residues" evidence="2">
    <location>
        <begin position="19"/>
        <end position="28"/>
    </location>
</feature>
<feature type="compositionally biased region" description="Low complexity" evidence="2">
    <location>
        <begin position="44"/>
        <end position="54"/>
    </location>
</feature>
<feature type="compositionally biased region" description="Polar residues" evidence="2">
    <location>
        <begin position="55"/>
        <end position="64"/>
    </location>
</feature>
<feature type="active site" evidence="1">
    <location>
        <position position="202"/>
    </location>
</feature>
<feature type="active site" evidence="1">
    <location>
        <position position="228"/>
    </location>
</feature>
<feature type="active site" evidence="1">
    <location>
        <position position="358"/>
    </location>
</feature>
<gene>
    <name type="primary">PPE1</name>
    <name type="ORF">FGRRES_00587</name>
    <name type="ORF">FGSG_00587</name>
</gene>
<reference key="1">
    <citation type="journal article" date="2007" name="Science">
        <title>The Fusarium graminearum genome reveals a link between localized polymorphism and pathogen specialization.</title>
        <authorList>
            <person name="Cuomo C.A."/>
            <person name="Gueldener U."/>
            <person name="Xu J.-R."/>
            <person name="Trail F."/>
            <person name="Turgeon B.G."/>
            <person name="Di Pietro A."/>
            <person name="Walton J.D."/>
            <person name="Ma L.-J."/>
            <person name="Baker S.E."/>
            <person name="Rep M."/>
            <person name="Adam G."/>
            <person name="Antoniw J."/>
            <person name="Baldwin T."/>
            <person name="Calvo S.E."/>
            <person name="Chang Y.-L."/>
            <person name="DeCaprio D."/>
            <person name="Gale L.R."/>
            <person name="Gnerre S."/>
            <person name="Goswami R.S."/>
            <person name="Hammond-Kosack K."/>
            <person name="Harris L.J."/>
            <person name="Hilburn K."/>
            <person name="Kennell J.C."/>
            <person name="Kroken S."/>
            <person name="Magnuson J.K."/>
            <person name="Mannhaupt G."/>
            <person name="Mauceli E.W."/>
            <person name="Mewes H.-W."/>
            <person name="Mitterbauer R."/>
            <person name="Muehlbauer G."/>
            <person name="Muensterkoetter M."/>
            <person name="Nelson D."/>
            <person name="O'Donnell K."/>
            <person name="Ouellet T."/>
            <person name="Qi W."/>
            <person name="Quesneville H."/>
            <person name="Roncero M.I.G."/>
            <person name="Seong K.-Y."/>
            <person name="Tetko I.V."/>
            <person name="Urban M."/>
            <person name="Waalwijk C."/>
            <person name="Ward T.J."/>
            <person name="Yao J."/>
            <person name="Birren B.W."/>
            <person name="Kistler H.C."/>
        </authorList>
    </citation>
    <scope>NUCLEOTIDE SEQUENCE [LARGE SCALE GENOMIC DNA]</scope>
    <source>
        <strain>ATCC MYA-4620 / CBS 123657 / FGSC 9075 / NRRL 31084 / PH-1</strain>
    </source>
</reference>
<reference key="2">
    <citation type="journal article" date="2010" name="Nature">
        <title>Comparative genomics reveals mobile pathogenicity chromosomes in Fusarium.</title>
        <authorList>
            <person name="Ma L.-J."/>
            <person name="van der Does H.C."/>
            <person name="Borkovich K.A."/>
            <person name="Coleman J.J."/>
            <person name="Daboussi M.-J."/>
            <person name="Di Pietro A."/>
            <person name="Dufresne M."/>
            <person name="Freitag M."/>
            <person name="Grabherr M."/>
            <person name="Henrissat B."/>
            <person name="Houterman P.M."/>
            <person name="Kang S."/>
            <person name="Shim W.-B."/>
            <person name="Woloshuk C."/>
            <person name="Xie X."/>
            <person name="Xu J.-R."/>
            <person name="Antoniw J."/>
            <person name="Baker S.E."/>
            <person name="Bluhm B.H."/>
            <person name="Breakspear A."/>
            <person name="Brown D.W."/>
            <person name="Butchko R.A.E."/>
            <person name="Chapman S."/>
            <person name="Coulson R."/>
            <person name="Coutinho P.M."/>
            <person name="Danchin E.G.J."/>
            <person name="Diener A."/>
            <person name="Gale L.R."/>
            <person name="Gardiner D.M."/>
            <person name="Goff S."/>
            <person name="Hammond-Kosack K.E."/>
            <person name="Hilburn K."/>
            <person name="Hua-Van A."/>
            <person name="Jonkers W."/>
            <person name="Kazan K."/>
            <person name="Kodira C.D."/>
            <person name="Koehrsen M."/>
            <person name="Kumar L."/>
            <person name="Lee Y.-H."/>
            <person name="Li L."/>
            <person name="Manners J.M."/>
            <person name="Miranda-Saavedra D."/>
            <person name="Mukherjee M."/>
            <person name="Park G."/>
            <person name="Park J."/>
            <person name="Park S.-Y."/>
            <person name="Proctor R.H."/>
            <person name="Regev A."/>
            <person name="Ruiz-Roldan M.C."/>
            <person name="Sain D."/>
            <person name="Sakthikumar S."/>
            <person name="Sykes S."/>
            <person name="Schwartz D.C."/>
            <person name="Turgeon B.G."/>
            <person name="Wapinski I."/>
            <person name="Yoder O."/>
            <person name="Young S."/>
            <person name="Zeng Q."/>
            <person name="Zhou S."/>
            <person name="Galagan J."/>
            <person name="Cuomo C.A."/>
            <person name="Kistler H.C."/>
            <person name="Rep M."/>
        </authorList>
    </citation>
    <scope>GENOME REANNOTATION</scope>
    <source>
        <strain>ATCC MYA-4620 / CBS 123657 / FGSC 9075 / NRRL 31084 / PH-1</strain>
    </source>
</reference>
<reference key="3">
    <citation type="journal article" date="2015" name="BMC Genomics">
        <title>The completed genome sequence of the pathogenic ascomycete fungus Fusarium graminearum.</title>
        <authorList>
            <person name="King R."/>
            <person name="Urban M."/>
            <person name="Hammond-Kosack M.C.U."/>
            <person name="Hassani-Pak K."/>
            <person name="Hammond-Kosack K.E."/>
        </authorList>
    </citation>
    <scope>NUCLEOTIDE SEQUENCE [LARGE SCALE GENOMIC DNA]</scope>
    <source>
        <strain>ATCC MYA-4620 / CBS 123657 / FGSC 9075 / NRRL 31084 / PH-1</strain>
    </source>
</reference>
<comment type="function">
    <text evidence="1">Demethylates proteins that have been reversibly carboxymethylated. Demethylates the phosphatase PP2A catalytic subunit (By similarity).</text>
</comment>
<comment type="catalytic activity">
    <reaction>
        <text>[phosphatase 2A protein]-C-terminal L-leucine methyl ester + H2O = [phosphatase 2A protein]-C-terminal L-leucine + methanol + H(+)</text>
        <dbReference type="Rhea" id="RHEA:48548"/>
        <dbReference type="Rhea" id="RHEA-COMP:12134"/>
        <dbReference type="Rhea" id="RHEA-COMP:12135"/>
        <dbReference type="ChEBI" id="CHEBI:15377"/>
        <dbReference type="ChEBI" id="CHEBI:15378"/>
        <dbReference type="ChEBI" id="CHEBI:17790"/>
        <dbReference type="ChEBI" id="CHEBI:90516"/>
        <dbReference type="ChEBI" id="CHEBI:90517"/>
        <dbReference type="EC" id="3.1.1.89"/>
    </reaction>
</comment>
<comment type="similarity">
    <text evidence="3">Belongs to the AB hydrolase superfamily.</text>
</comment>
<protein>
    <recommendedName>
        <fullName>Protein phosphatase methylesterase 1</fullName>
        <shortName>PME-1</shortName>
        <ecNumber>3.1.1.89</ecNumber>
    </recommendedName>
</protein>
<proteinExistence type="inferred from homology"/>
<organism>
    <name type="scientific">Gibberella zeae (strain ATCC MYA-4620 / CBS 123657 / FGSC 9075 / NRRL 31084 / PH-1)</name>
    <name type="common">Wheat head blight fungus</name>
    <name type="synonym">Fusarium graminearum</name>
    <dbReference type="NCBI Taxonomy" id="229533"/>
    <lineage>
        <taxon>Eukaryota</taxon>
        <taxon>Fungi</taxon>
        <taxon>Dikarya</taxon>
        <taxon>Ascomycota</taxon>
        <taxon>Pezizomycotina</taxon>
        <taxon>Sordariomycetes</taxon>
        <taxon>Hypocreomycetidae</taxon>
        <taxon>Hypocreales</taxon>
        <taxon>Nectriaceae</taxon>
        <taxon>Fusarium</taxon>
    </lineage>
</organism>
<name>PPME1_GIBZE</name>
<keyword id="KW-0378">Hydrolase</keyword>
<keyword id="KW-1185">Reference proteome</keyword>
<keyword id="KW-0719">Serine esterase</keyword>
<accession>Q4IQC1</accession>
<accession>A0A0E0RMS4</accession>
<accession>V6QV46</accession>